<gene>
    <name evidence="1" type="primary">trpF</name>
    <name type="ordered locus">PFLU_4188</name>
</gene>
<keyword id="KW-0028">Amino-acid biosynthesis</keyword>
<keyword id="KW-0057">Aromatic amino acid biosynthesis</keyword>
<keyword id="KW-0413">Isomerase</keyword>
<keyword id="KW-0822">Tryptophan biosynthesis</keyword>
<comment type="catalytic activity">
    <reaction evidence="1">
        <text>N-(5-phospho-beta-D-ribosyl)anthranilate = 1-(2-carboxyphenylamino)-1-deoxy-D-ribulose 5-phosphate</text>
        <dbReference type="Rhea" id="RHEA:21540"/>
        <dbReference type="ChEBI" id="CHEBI:18277"/>
        <dbReference type="ChEBI" id="CHEBI:58613"/>
        <dbReference type="EC" id="5.3.1.24"/>
    </reaction>
</comment>
<comment type="pathway">
    <text evidence="1">Amino-acid biosynthesis; L-tryptophan biosynthesis; L-tryptophan from chorismate: step 3/5.</text>
</comment>
<comment type="similarity">
    <text evidence="1">Belongs to the TrpF family.</text>
</comment>
<protein>
    <recommendedName>
        <fullName evidence="1">N-(5'-phosphoribosyl)anthranilate isomerase</fullName>
        <shortName evidence="1">PRAI</shortName>
        <ecNumber evidence="1">5.3.1.24</ecNumber>
    </recommendedName>
</protein>
<reference key="1">
    <citation type="journal article" date="2009" name="Genome Biol.">
        <title>Genomic and genetic analyses of diversity and plant interactions of Pseudomonas fluorescens.</title>
        <authorList>
            <person name="Silby M.W."/>
            <person name="Cerdeno-Tarraga A.M."/>
            <person name="Vernikos G.S."/>
            <person name="Giddens S.R."/>
            <person name="Jackson R.W."/>
            <person name="Preston G.M."/>
            <person name="Zhang X.-X."/>
            <person name="Moon C.D."/>
            <person name="Gehrig S.M."/>
            <person name="Godfrey S.A.C."/>
            <person name="Knight C.G."/>
            <person name="Malone J.G."/>
            <person name="Robinson Z."/>
            <person name="Spiers A.J."/>
            <person name="Harris S."/>
            <person name="Challis G.L."/>
            <person name="Yaxley A.M."/>
            <person name="Harris D."/>
            <person name="Seeger K."/>
            <person name="Murphy L."/>
            <person name="Rutter S."/>
            <person name="Squares R."/>
            <person name="Quail M.A."/>
            <person name="Saunders E."/>
            <person name="Mavromatis K."/>
            <person name="Brettin T.S."/>
            <person name="Bentley S.D."/>
            <person name="Hothersall J."/>
            <person name="Stephens E."/>
            <person name="Thomas C.M."/>
            <person name="Parkhill J."/>
            <person name="Levy S.B."/>
            <person name="Rainey P.B."/>
            <person name="Thomson N.R."/>
        </authorList>
    </citation>
    <scope>NUCLEOTIDE SEQUENCE [LARGE SCALE GENOMIC DNA]</scope>
    <source>
        <strain>SBW25</strain>
    </source>
</reference>
<organism>
    <name type="scientific">Pseudomonas fluorescens (strain SBW25)</name>
    <dbReference type="NCBI Taxonomy" id="216595"/>
    <lineage>
        <taxon>Bacteria</taxon>
        <taxon>Pseudomonadati</taxon>
        <taxon>Pseudomonadota</taxon>
        <taxon>Gammaproteobacteria</taxon>
        <taxon>Pseudomonadales</taxon>
        <taxon>Pseudomonadaceae</taxon>
        <taxon>Pseudomonas</taxon>
    </lineage>
</organism>
<accession>C3JZS5</accession>
<name>TRPF_PSEFS</name>
<evidence type="ECO:0000255" key="1">
    <source>
        <dbReference type="HAMAP-Rule" id="MF_00135"/>
    </source>
</evidence>
<proteinExistence type="inferred from homology"/>
<feature type="chain" id="PRO_1000203213" description="N-(5'-phosphoribosyl)anthranilate isomerase">
    <location>
        <begin position="1"/>
        <end position="210"/>
    </location>
</feature>
<sequence length="210" mass="21980">MSAVRSKICGITRIEDALAAVEAGADAIGLVFYAKSPRSVNVLQARAIIAALPPFVTTVGLFVNASRCELNETLDAVPLDMLQFHGDETPDECESYQRPYIKALRVKSGDDIAAACAAYSGARGILLDTYVEGVPGGTGEAFDWSLIPPGLSKPIILAGGLTPTNVGAAIEQVQPYAVDVSGGVEQGKGIKDHSKIRAFMQAVRNSSGAM</sequence>
<dbReference type="EC" id="5.3.1.24" evidence="1"/>
<dbReference type="EMBL" id="AM181176">
    <property type="protein sequence ID" value="CAY50704.1"/>
    <property type="molecule type" value="Genomic_DNA"/>
</dbReference>
<dbReference type="RefSeq" id="WP_015884969.1">
    <property type="nucleotide sequence ID" value="NC_012660.1"/>
</dbReference>
<dbReference type="SMR" id="C3JZS5"/>
<dbReference type="STRING" id="294.SRM1_01992"/>
<dbReference type="PATRIC" id="fig|216595.4.peg.4332"/>
<dbReference type="eggNOG" id="COG0135">
    <property type="taxonomic scope" value="Bacteria"/>
</dbReference>
<dbReference type="HOGENOM" id="CLU_076364_2_0_6"/>
<dbReference type="OrthoDB" id="9796196at2"/>
<dbReference type="UniPathway" id="UPA00035">
    <property type="reaction ID" value="UER00042"/>
</dbReference>
<dbReference type="GO" id="GO:0004640">
    <property type="term" value="F:phosphoribosylanthranilate isomerase activity"/>
    <property type="evidence" value="ECO:0007669"/>
    <property type="project" value="UniProtKB-UniRule"/>
</dbReference>
<dbReference type="GO" id="GO:0000162">
    <property type="term" value="P:L-tryptophan biosynthetic process"/>
    <property type="evidence" value="ECO:0007669"/>
    <property type="project" value="UniProtKB-UniRule"/>
</dbReference>
<dbReference type="CDD" id="cd00405">
    <property type="entry name" value="PRAI"/>
    <property type="match status" value="1"/>
</dbReference>
<dbReference type="FunFam" id="3.20.20.70:FF:000075">
    <property type="entry name" value="Tryptophan biosynthesis protein TRP1"/>
    <property type="match status" value="1"/>
</dbReference>
<dbReference type="Gene3D" id="3.20.20.70">
    <property type="entry name" value="Aldolase class I"/>
    <property type="match status" value="1"/>
</dbReference>
<dbReference type="HAMAP" id="MF_00135">
    <property type="entry name" value="PRAI"/>
    <property type="match status" value="1"/>
</dbReference>
<dbReference type="InterPro" id="IPR013785">
    <property type="entry name" value="Aldolase_TIM"/>
</dbReference>
<dbReference type="InterPro" id="IPR001240">
    <property type="entry name" value="PRAI_dom"/>
</dbReference>
<dbReference type="InterPro" id="IPR011060">
    <property type="entry name" value="RibuloseP-bd_barrel"/>
</dbReference>
<dbReference type="InterPro" id="IPR044643">
    <property type="entry name" value="TrpF_fam"/>
</dbReference>
<dbReference type="NCBIfam" id="NF002298">
    <property type="entry name" value="PRK01222.1-4"/>
    <property type="match status" value="1"/>
</dbReference>
<dbReference type="NCBIfam" id="NF002299">
    <property type="entry name" value="PRK01222.1-6"/>
    <property type="match status" value="1"/>
</dbReference>
<dbReference type="PANTHER" id="PTHR42894">
    <property type="entry name" value="N-(5'-PHOSPHORIBOSYL)ANTHRANILATE ISOMERASE"/>
    <property type="match status" value="1"/>
</dbReference>
<dbReference type="PANTHER" id="PTHR42894:SF1">
    <property type="entry name" value="N-(5'-PHOSPHORIBOSYL)ANTHRANILATE ISOMERASE"/>
    <property type="match status" value="1"/>
</dbReference>
<dbReference type="Pfam" id="PF00697">
    <property type="entry name" value="PRAI"/>
    <property type="match status" value="1"/>
</dbReference>
<dbReference type="SUPFAM" id="SSF51366">
    <property type="entry name" value="Ribulose-phoshate binding barrel"/>
    <property type="match status" value="1"/>
</dbReference>